<comment type="function">
    <molecule>CLE5p</molecule>
    <text evidence="4">Extracellular signal peptide that regulates cell fate.</text>
</comment>
<comment type="subcellular location">
    <molecule>CLE5p</molecule>
    <subcellularLocation>
        <location evidence="1">Secreted</location>
        <location evidence="1">Extracellular space</location>
    </subcellularLocation>
</comment>
<comment type="tissue specificity">
    <molecule>CLE5p</molecule>
    <text evidence="3">Mostly expressed in roots, and, to a lower extent, in seedlings, stems, apex, flowers and siliques.</text>
</comment>
<comment type="PTM">
    <molecule>CLE5p</molecule>
    <text evidence="1">The O-glycosylation (arabinosylation) of the hydroxyproline Pro-76 enhances binding affinity of the CLE5p peptide for its receptor.</text>
</comment>
<comment type="similarity">
    <text evidence="6">Belongs to the CLV3/ESR signal peptide family.</text>
</comment>
<comment type="sequence caution" evidence="6">
    <conflict type="erroneous initiation">
        <sequence resource="EMBL-CDS" id="AAM15027"/>
    </conflict>
    <text>Extended N-terminus.</text>
</comment>
<gene>
    <name evidence="5" type="primary">CLE5</name>
    <name type="synonym">CLE7</name>
    <name evidence="7" type="ordered locus">At2g31083</name>
    <name evidence="8" type="ORF">T16B12</name>
</gene>
<dbReference type="EMBL" id="AC005311">
    <property type="protein sequence ID" value="AAM15027.1"/>
    <property type="status" value="ALT_INIT"/>
    <property type="molecule type" value="Genomic_DNA"/>
</dbReference>
<dbReference type="EMBL" id="CP002685">
    <property type="protein sequence ID" value="AEC08490.1"/>
    <property type="molecule type" value="Genomic_DNA"/>
</dbReference>
<dbReference type="EMBL" id="AY464584">
    <property type="status" value="NOT_ANNOTATED_CDS"/>
    <property type="molecule type" value="mRNA"/>
</dbReference>
<dbReference type="RefSeq" id="NP_001325401.1">
    <property type="nucleotide sequence ID" value="NM_001336315.1"/>
</dbReference>
<dbReference type="RefSeq" id="NP_850159.2">
    <property type="nucleotide sequence ID" value="NM_179828.3"/>
</dbReference>
<dbReference type="STRING" id="3702.Q8S8N2"/>
<dbReference type="GlyCosmos" id="Q8S8N2">
    <property type="glycosylation" value="1 site, No reported glycans"/>
</dbReference>
<dbReference type="PaxDb" id="3702-AT2G31083.1"/>
<dbReference type="EnsemblPlants" id="AT2G31083.1">
    <property type="protein sequence ID" value="AT2G31083.1"/>
    <property type="gene ID" value="AT2G31083"/>
</dbReference>
<dbReference type="GeneID" id="817663"/>
<dbReference type="Gramene" id="AT2G31083.1">
    <property type="protein sequence ID" value="AT2G31083.1"/>
    <property type="gene ID" value="AT2G31083"/>
</dbReference>
<dbReference type="KEGG" id="ath:AT2G31083"/>
<dbReference type="Araport" id="AT2G31083"/>
<dbReference type="TAIR" id="AT2G31083">
    <property type="gene designation" value="CLE5"/>
</dbReference>
<dbReference type="eggNOG" id="ENOG502SZED">
    <property type="taxonomic scope" value="Eukaryota"/>
</dbReference>
<dbReference type="HOGENOM" id="CLU_154904_2_0_1"/>
<dbReference type="InParanoid" id="Q8S8N2"/>
<dbReference type="OMA" id="RNSHHER"/>
<dbReference type="OrthoDB" id="1406315at2759"/>
<dbReference type="PhylomeDB" id="Q8S8N2"/>
<dbReference type="PRO" id="PR:Q8S8N2"/>
<dbReference type="Proteomes" id="UP000006548">
    <property type="component" value="Chromosome 2"/>
</dbReference>
<dbReference type="ExpressionAtlas" id="Q8S8N2">
    <property type="expression patterns" value="baseline and differential"/>
</dbReference>
<dbReference type="GO" id="GO:0048046">
    <property type="term" value="C:apoplast"/>
    <property type="evidence" value="ECO:0000255"/>
    <property type="project" value="TAIR"/>
</dbReference>
<dbReference type="GO" id="GO:0033612">
    <property type="term" value="F:receptor serine/threonine kinase binding"/>
    <property type="evidence" value="ECO:0000353"/>
    <property type="project" value="UniProtKB"/>
</dbReference>
<dbReference type="GO" id="GO:0045168">
    <property type="term" value="P:cell-cell signaling involved in cell fate commitment"/>
    <property type="evidence" value="ECO:0000250"/>
    <property type="project" value="UniProtKB"/>
</dbReference>
<dbReference type="InterPro" id="IPR039617">
    <property type="entry name" value="CLAVATA3-CLE"/>
</dbReference>
<dbReference type="PANTHER" id="PTHR36016">
    <property type="entry name" value="CLAVATA3/ESR (CLE)-RELATED PROTEIN 7"/>
    <property type="match status" value="1"/>
</dbReference>
<dbReference type="PANTHER" id="PTHR36016:SF1">
    <property type="entry name" value="CLAVATA3_ESR (CLE)-RELATED PROTEIN 5-RELATED"/>
    <property type="match status" value="1"/>
</dbReference>
<protein>
    <recommendedName>
        <fullName evidence="5">CLAVATA3/ESR (CLE)-related protein 5</fullName>
    </recommendedName>
    <component>
        <recommendedName>
            <fullName evidence="5">CLE5p</fullName>
        </recommendedName>
    </component>
</protein>
<feature type="signal peptide" evidence="2">
    <location>
        <begin position="1"/>
        <end position="26"/>
    </location>
</feature>
<feature type="chain" id="PRO_0000401241" description="CLAVATA3/ESR (CLE)-related protein 5">
    <location>
        <begin position="27"/>
        <end position="81"/>
    </location>
</feature>
<feature type="peptide" id="PRO_0000401242" description="CLE5p" evidence="1">
    <location>
        <begin position="70"/>
        <end position="81"/>
    </location>
</feature>
<feature type="modified residue" description="Hydroxyproline" evidence="1">
    <location>
        <position position="73"/>
    </location>
</feature>
<feature type="modified residue" description="Hydroxyproline" evidence="1">
    <location>
        <position position="76"/>
    </location>
</feature>
<feature type="glycosylation site" description="O-linked (Ara...) hydroxyproline" evidence="1">
    <location>
        <position position="76"/>
    </location>
</feature>
<reference key="1">
    <citation type="journal article" date="1999" name="Nature">
        <title>Sequence and analysis of chromosome 2 of the plant Arabidopsis thaliana.</title>
        <authorList>
            <person name="Lin X."/>
            <person name="Kaul S."/>
            <person name="Rounsley S.D."/>
            <person name="Shea T.P."/>
            <person name="Benito M.-I."/>
            <person name="Town C.D."/>
            <person name="Fujii C.Y."/>
            <person name="Mason T.M."/>
            <person name="Bowman C.L."/>
            <person name="Barnstead M.E."/>
            <person name="Feldblyum T.V."/>
            <person name="Buell C.R."/>
            <person name="Ketchum K.A."/>
            <person name="Lee J.J."/>
            <person name="Ronning C.M."/>
            <person name="Koo H.L."/>
            <person name="Moffat K.S."/>
            <person name="Cronin L.A."/>
            <person name="Shen M."/>
            <person name="Pai G."/>
            <person name="Van Aken S."/>
            <person name="Umayam L."/>
            <person name="Tallon L.J."/>
            <person name="Gill J.E."/>
            <person name="Adams M.D."/>
            <person name="Carrera A.J."/>
            <person name="Creasy T.H."/>
            <person name="Goodman H.M."/>
            <person name="Somerville C.R."/>
            <person name="Copenhaver G.P."/>
            <person name="Preuss D."/>
            <person name="Nierman W.C."/>
            <person name="White O."/>
            <person name="Eisen J.A."/>
            <person name="Salzberg S.L."/>
            <person name="Fraser C.M."/>
            <person name="Venter J.C."/>
        </authorList>
    </citation>
    <scope>NUCLEOTIDE SEQUENCE [LARGE SCALE GENOMIC DNA]</scope>
    <source>
        <strain>cv. Columbia</strain>
    </source>
</reference>
<reference key="2">
    <citation type="journal article" date="2017" name="Plant J.">
        <title>Araport11: a complete reannotation of the Arabidopsis thaliana reference genome.</title>
        <authorList>
            <person name="Cheng C.Y."/>
            <person name="Krishnakumar V."/>
            <person name="Chan A.P."/>
            <person name="Thibaud-Nissen F."/>
            <person name="Schobel S."/>
            <person name="Town C.D."/>
        </authorList>
    </citation>
    <scope>GENOME REANNOTATION</scope>
    <source>
        <strain>cv. Columbia</strain>
    </source>
</reference>
<reference key="3">
    <citation type="journal article" date="2005" name="Plant Physiol.">
        <title>Analysis of the cDNAs of hypothetical genes on Arabidopsis chromosome 2 reveals numerous transcript variants.</title>
        <authorList>
            <person name="Xiao Y.-L."/>
            <person name="Smith S.R."/>
            <person name="Ishmael N."/>
            <person name="Redman J.C."/>
            <person name="Kumar N."/>
            <person name="Monaghan E.L."/>
            <person name="Ayele M."/>
            <person name="Haas B.J."/>
            <person name="Wu H.C."/>
            <person name="Town C.D."/>
        </authorList>
    </citation>
    <scope>NUCLEOTIDE SEQUENCE [LARGE SCALE MRNA]</scope>
    <source>
        <strain>cv. Columbia</strain>
    </source>
</reference>
<reference key="4">
    <citation type="journal article" date="2001" name="Plant Physiol.">
        <title>A large family of genes that share homology with CLAVATA3.</title>
        <authorList>
            <person name="Cock J.M."/>
            <person name="McCormick S."/>
        </authorList>
    </citation>
    <scope>GENE FAMILY</scope>
    <scope>NOMENCLATURE</scope>
</reference>
<reference key="5">
    <citation type="journal article" date="2003" name="Plant Mol. Biol.">
        <title>The Arabidopsis CLV3-like (CLE) genes are expressed in diverse tissues and encode secreted proteins.</title>
        <authorList>
            <person name="Sharma V.K."/>
            <person name="Ramirez J."/>
            <person name="Fletcher J.C."/>
        </authorList>
    </citation>
    <scope>TISSUE SPECIFICITY</scope>
</reference>
<reference key="6">
    <citation type="journal article" date="2006" name="Plant Physiol.">
        <title>Gain-of-function phenotypes of many CLAVATA3/ESR genes, including four new family members, correlate with tandem variations in the conserved CLAVATA3/ESR domain.</title>
        <authorList>
            <person name="Strabala T.J."/>
            <person name="O'donnell P.J."/>
            <person name="Smit A.-M."/>
            <person name="Ampomah-Dwamena C."/>
            <person name="Martin E.J."/>
            <person name="Netzler N."/>
            <person name="Nieuwenhuizen N.J."/>
            <person name="Quinn B.D."/>
            <person name="Foote H.C.C."/>
            <person name="Hudson K.R."/>
        </authorList>
    </citation>
    <scope>FUNCTION</scope>
    <scope>GENE FAMILY</scope>
</reference>
<reference key="7">
    <citation type="journal article" date="2008" name="Cell. Mol. Life Sci.">
        <title>The CLE family of plant polypeptide signaling molecules.</title>
        <authorList>
            <person name="Jun J.H."/>
            <person name="Fiume E."/>
            <person name="Fletcher J.C."/>
        </authorList>
    </citation>
    <scope>REVIEW</scope>
</reference>
<reference key="8">
    <citation type="journal article" date="2008" name="Curr. Opin. Plant Biol.">
        <title>Diverse and conserved roles of CLE peptides.</title>
        <authorList>
            <person name="Mitchum M.G."/>
            <person name="Wang X."/>
            <person name="Davis E.L."/>
        </authorList>
    </citation>
    <scope>REVIEW</scope>
</reference>
<reference key="9">
    <citation type="journal article" date="2010" name="Protoplasma">
        <title>CLE peptide signaling during plant development.</title>
        <authorList>
            <person name="Wang G."/>
            <person name="Fiers M."/>
        </authorList>
    </citation>
    <scope>REVIEW</scope>
</reference>
<organism>
    <name type="scientific">Arabidopsis thaliana</name>
    <name type="common">Mouse-ear cress</name>
    <dbReference type="NCBI Taxonomy" id="3702"/>
    <lineage>
        <taxon>Eukaryota</taxon>
        <taxon>Viridiplantae</taxon>
        <taxon>Streptophyta</taxon>
        <taxon>Embryophyta</taxon>
        <taxon>Tracheophyta</taxon>
        <taxon>Spermatophyta</taxon>
        <taxon>Magnoliopsida</taxon>
        <taxon>eudicotyledons</taxon>
        <taxon>Gunneridae</taxon>
        <taxon>Pentapetalae</taxon>
        <taxon>rosids</taxon>
        <taxon>malvids</taxon>
        <taxon>Brassicales</taxon>
        <taxon>Brassicaceae</taxon>
        <taxon>Camelineae</taxon>
        <taxon>Arabidopsis</taxon>
    </lineage>
</organism>
<sequence length="81" mass="9132">MATLILKQTLIILLIIFSLQTLSSQARILRSYRAVSMGNMDSQVLLHELGFDLSKFKGHNERRFLVSSDRVSPGGPDPQHH</sequence>
<proteinExistence type="evidence at transcript level"/>
<evidence type="ECO:0000250" key="1">
    <source>
        <dbReference type="UniProtKB" id="O49519"/>
    </source>
</evidence>
<evidence type="ECO:0000255" key="2"/>
<evidence type="ECO:0000269" key="3">
    <source>
    </source>
</evidence>
<evidence type="ECO:0000269" key="4">
    <source>
    </source>
</evidence>
<evidence type="ECO:0000303" key="5">
    <source>
    </source>
</evidence>
<evidence type="ECO:0000305" key="6"/>
<evidence type="ECO:0000312" key="7">
    <source>
        <dbReference type="Araport" id="AT2G31083"/>
    </source>
</evidence>
<evidence type="ECO:0000312" key="8">
    <source>
        <dbReference type="EMBL" id="AAM15027.1"/>
    </source>
</evidence>
<keyword id="KW-0217">Developmental protein</keyword>
<keyword id="KW-0221">Differentiation</keyword>
<keyword id="KW-0325">Glycoprotein</keyword>
<keyword id="KW-0379">Hydroxylation</keyword>
<keyword id="KW-1185">Reference proteome</keyword>
<keyword id="KW-0964">Secreted</keyword>
<keyword id="KW-0732">Signal</keyword>
<accession>Q8S8N2</accession>
<name>CLE5_ARATH</name>